<sequence length="344" mass="37281">MDTNKQKALDLAIKQIDKAFGKGALVKLGDKQIEPIESISTGSLGLDLALGIGGVPKGRIVEIYGPESSGKTTLALQIIAEAQKKGGVAAFIDAEHALDVLYAKNLGVDIDNLLVSQPDFGEQALDIVETIARSGAVDVIVIDSVAALTPKAEIEGEMGDSHMGLQARLMSQALRKLTGVVHKMDTTVIFINQIRMKIGAMGYGTPETTTGGNALKFYASVRVDVRRIATLKQGESQIGNRVRAKVVKNKVAPPFRQAEFDIMFGEGISKEGELIDYGVKMDIIDKSGSWFSYKDIKLGQGRENAKAYLKEHPEVAQEIENEIRRAMGMDDSVMMVPENEMSEE</sequence>
<reference key="1">
    <citation type="journal article" date="2007" name="Proc. Natl. Acad. Sci. U.S.A.">
        <title>Deep-sea vent epsilon-proteobacterial genomes provide insights into emergence of pathogens.</title>
        <authorList>
            <person name="Nakagawa S."/>
            <person name="Takaki Y."/>
            <person name="Shimamura S."/>
            <person name="Reysenbach A.-L."/>
            <person name="Takai K."/>
            <person name="Horikoshi K."/>
        </authorList>
    </citation>
    <scope>NUCLEOTIDE SEQUENCE [LARGE SCALE GENOMIC DNA]</scope>
    <source>
        <strain>SB155-2</strain>
    </source>
</reference>
<evidence type="ECO:0000255" key="1">
    <source>
        <dbReference type="HAMAP-Rule" id="MF_00268"/>
    </source>
</evidence>
<dbReference type="EMBL" id="AP009178">
    <property type="protein sequence ID" value="BAF70764.1"/>
    <property type="molecule type" value="Genomic_DNA"/>
</dbReference>
<dbReference type="RefSeq" id="WP_012083027.1">
    <property type="nucleotide sequence ID" value="NC_009662.1"/>
</dbReference>
<dbReference type="SMR" id="A6Q5K5"/>
<dbReference type="FunCoup" id="A6Q5K5">
    <property type="interactions" value="436"/>
</dbReference>
<dbReference type="STRING" id="387092.NIS_1658"/>
<dbReference type="KEGG" id="nis:NIS_1658"/>
<dbReference type="eggNOG" id="COG0468">
    <property type="taxonomic scope" value="Bacteria"/>
</dbReference>
<dbReference type="HOGENOM" id="CLU_040469_1_2_7"/>
<dbReference type="InParanoid" id="A6Q5K5"/>
<dbReference type="OrthoDB" id="9776733at2"/>
<dbReference type="Proteomes" id="UP000001118">
    <property type="component" value="Chromosome"/>
</dbReference>
<dbReference type="GO" id="GO:0005829">
    <property type="term" value="C:cytosol"/>
    <property type="evidence" value="ECO:0007669"/>
    <property type="project" value="TreeGrafter"/>
</dbReference>
<dbReference type="GO" id="GO:0005524">
    <property type="term" value="F:ATP binding"/>
    <property type="evidence" value="ECO:0007669"/>
    <property type="project" value="UniProtKB-UniRule"/>
</dbReference>
<dbReference type="GO" id="GO:0016887">
    <property type="term" value="F:ATP hydrolysis activity"/>
    <property type="evidence" value="ECO:0007669"/>
    <property type="project" value="InterPro"/>
</dbReference>
<dbReference type="GO" id="GO:0140664">
    <property type="term" value="F:ATP-dependent DNA damage sensor activity"/>
    <property type="evidence" value="ECO:0007669"/>
    <property type="project" value="InterPro"/>
</dbReference>
<dbReference type="GO" id="GO:0003684">
    <property type="term" value="F:damaged DNA binding"/>
    <property type="evidence" value="ECO:0007669"/>
    <property type="project" value="UniProtKB-UniRule"/>
</dbReference>
<dbReference type="GO" id="GO:0003697">
    <property type="term" value="F:single-stranded DNA binding"/>
    <property type="evidence" value="ECO:0007669"/>
    <property type="project" value="UniProtKB-UniRule"/>
</dbReference>
<dbReference type="GO" id="GO:0006310">
    <property type="term" value="P:DNA recombination"/>
    <property type="evidence" value="ECO:0007669"/>
    <property type="project" value="UniProtKB-UniRule"/>
</dbReference>
<dbReference type="GO" id="GO:0006281">
    <property type="term" value="P:DNA repair"/>
    <property type="evidence" value="ECO:0007669"/>
    <property type="project" value="UniProtKB-UniRule"/>
</dbReference>
<dbReference type="GO" id="GO:0009432">
    <property type="term" value="P:SOS response"/>
    <property type="evidence" value="ECO:0007669"/>
    <property type="project" value="UniProtKB-UniRule"/>
</dbReference>
<dbReference type="CDD" id="cd00983">
    <property type="entry name" value="RecA"/>
    <property type="match status" value="1"/>
</dbReference>
<dbReference type="FunFam" id="3.40.50.300:FF:000087">
    <property type="entry name" value="Recombinase RecA"/>
    <property type="match status" value="1"/>
</dbReference>
<dbReference type="Gene3D" id="3.40.50.300">
    <property type="entry name" value="P-loop containing nucleotide triphosphate hydrolases"/>
    <property type="match status" value="1"/>
</dbReference>
<dbReference type="HAMAP" id="MF_00268">
    <property type="entry name" value="RecA"/>
    <property type="match status" value="1"/>
</dbReference>
<dbReference type="InterPro" id="IPR003593">
    <property type="entry name" value="AAA+_ATPase"/>
</dbReference>
<dbReference type="InterPro" id="IPR013765">
    <property type="entry name" value="DNA_recomb/repair_RecA"/>
</dbReference>
<dbReference type="InterPro" id="IPR020584">
    <property type="entry name" value="DNA_recomb/repair_RecA_CS"/>
</dbReference>
<dbReference type="InterPro" id="IPR027417">
    <property type="entry name" value="P-loop_NTPase"/>
</dbReference>
<dbReference type="InterPro" id="IPR049261">
    <property type="entry name" value="RecA-like_C"/>
</dbReference>
<dbReference type="InterPro" id="IPR049428">
    <property type="entry name" value="RecA-like_N"/>
</dbReference>
<dbReference type="InterPro" id="IPR020588">
    <property type="entry name" value="RecA_ATP-bd"/>
</dbReference>
<dbReference type="InterPro" id="IPR023400">
    <property type="entry name" value="RecA_C_sf"/>
</dbReference>
<dbReference type="InterPro" id="IPR020587">
    <property type="entry name" value="RecA_monomer-monomer_interface"/>
</dbReference>
<dbReference type="NCBIfam" id="TIGR02012">
    <property type="entry name" value="tigrfam_recA"/>
    <property type="match status" value="1"/>
</dbReference>
<dbReference type="PANTHER" id="PTHR45900:SF1">
    <property type="entry name" value="MITOCHONDRIAL DNA REPAIR PROTEIN RECA HOMOLOG-RELATED"/>
    <property type="match status" value="1"/>
</dbReference>
<dbReference type="PANTHER" id="PTHR45900">
    <property type="entry name" value="RECA"/>
    <property type="match status" value="1"/>
</dbReference>
<dbReference type="Pfam" id="PF00154">
    <property type="entry name" value="RecA"/>
    <property type="match status" value="1"/>
</dbReference>
<dbReference type="Pfam" id="PF21096">
    <property type="entry name" value="RecA_C"/>
    <property type="match status" value="1"/>
</dbReference>
<dbReference type="PRINTS" id="PR00142">
    <property type="entry name" value="RECA"/>
</dbReference>
<dbReference type="SMART" id="SM00382">
    <property type="entry name" value="AAA"/>
    <property type="match status" value="1"/>
</dbReference>
<dbReference type="SUPFAM" id="SSF52540">
    <property type="entry name" value="P-loop containing nucleoside triphosphate hydrolases"/>
    <property type="match status" value="1"/>
</dbReference>
<dbReference type="SUPFAM" id="SSF54752">
    <property type="entry name" value="RecA protein, C-terminal domain"/>
    <property type="match status" value="1"/>
</dbReference>
<dbReference type="PROSITE" id="PS00321">
    <property type="entry name" value="RECA_1"/>
    <property type="match status" value="1"/>
</dbReference>
<dbReference type="PROSITE" id="PS50162">
    <property type="entry name" value="RECA_2"/>
    <property type="match status" value="1"/>
</dbReference>
<dbReference type="PROSITE" id="PS50163">
    <property type="entry name" value="RECA_3"/>
    <property type="match status" value="1"/>
</dbReference>
<feature type="chain" id="PRO_1000047954" description="Protein RecA">
    <location>
        <begin position="1"/>
        <end position="344"/>
    </location>
</feature>
<feature type="binding site" evidence="1">
    <location>
        <begin position="65"/>
        <end position="72"/>
    </location>
    <ligand>
        <name>ATP</name>
        <dbReference type="ChEBI" id="CHEBI:30616"/>
    </ligand>
</feature>
<name>RECA_NITSB</name>
<organism>
    <name type="scientific">Nitratiruptor sp. (strain SB155-2)</name>
    <dbReference type="NCBI Taxonomy" id="387092"/>
    <lineage>
        <taxon>Bacteria</taxon>
        <taxon>Pseudomonadati</taxon>
        <taxon>Campylobacterota</taxon>
        <taxon>Epsilonproteobacteria</taxon>
        <taxon>Nautiliales</taxon>
        <taxon>Nitratiruptoraceae</taxon>
        <taxon>Nitratiruptor</taxon>
    </lineage>
</organism>
<gene>
    <name evidence="1" type="primary">recA</name>
    <name type="ordered locus">NIS_1658</name>
</gene>
<protein>
    <recommendedName>
        <fullName evidence="1">Protein RecA</fullName>
    </recommendedName>
    <alternativeName>
        <fullName evidence="1">Recombinase A</fullName>
    </alternativeName>
</protein>
<comment type="function">
    <text evidence="1">Can catalyze the hydrolysis of ATP in the presence of single-stranded DNA, the ATP-dependent uptake of single-stranded DNA by duplex DNA, and the ATP-dependent hybridization of homologous single-stranded DNAs. It interacts with LexA causing its activation and leading to its autocatalytic cleavage.</text>
</comment>
<comment type="subcellular location">
    <subcellularLocation>
        <location evidence="1">Cytoplasm</location>
    </subcellularLocation>
</comment>
<comment type="similarity">
    <text evidence="1">Belongs to the RecA family.</text>
</comment>
<proteinExistence type="inferred from homology"/>
<keyword id="KW-0067">ATP-binding</keyword>
<keyword id="KW-0963">Cytoplasm</keyword>
<keyword id="KW-0227">DNA damage</keyword>
<keyword id="KW-0233">DNA recombination</keyword>
<keyword id="KW-0234">DNA repair</keyword>
<keyword id="KW-0238">DNA-binding</keyword>
<keyword id="KW-0547">Nucleotide-binding</keyword>
<keyword id="KW-1185">Reference proteome</keyword>
<keyword id="KW-0742">SOS response</keyword>
<accession>A6Q5K5</accession>